<feature type="chain" id="PRO_0000168192" description="RH-like protein ID">
    <location>
        <begin position="1"/>
        <end position="417"/>
    </location>
</feature>
<feature type="transmembrane region" description="Helical" evidence="1">
    <location>
        <begin position="12"/>
        <end position="32"/>
    </location>
</feature>
<feature type="transmembrane region" description="Helical" evidence="1">
    <location>
        <begin position="44"/>
        <end position="64"/>
    </location>
</feature>
<feature type="transmembrane region" description="Helical" evidence="1">
    <location>
        <begin position="77"/>
        <end position="97"/>
    </location>
</feature>
<feature type="transmembrane region" description="Helical" evidence="1">
    <location>
        <begin position="125"/>
        <end position="145"/>
    </location>
</feature>
<feature type="transmembrane region" description="Helical" evidence="1">
    <location>
        <begin position="172"/>
        <end position="192"/>
    </location>
</feature>
<feature type="transmembrane region" description="Helical" evidence="1">
    <location>
        <begin position="203"/>
        <end position="223"/>
    </location>
</feature>
<feature type="transmembrane region" description="Helical" evidence="1">
    <location>
        <begin position="238"/>
        <end position="258"/>
    </location>
</feature>
<feature type="transmembrane region" description="Helical" evidence="1">
    <location>
        <begin position="265"/>
        <end position="285"/>
    </location>
</feature>
<feature type="transmembrane region" description="Helical" evidence="1">
    <location>
        <begin position="287"/>
        <end position="307"/>
    </location>
</feature>
<feature type="transmembrane region" description="Helical" evidence="1">
    <location>
        <begin position="331"/>
        <end position="351"/>
    </location>
</feature>
<feature type="transmembrane region" description="Helical" evidence="1">
    <location>
        <begin position="358"/>
        <end position="378"/>
    </location>
</feature>
<proteinExistence type="evidence at transcript level"/>
<organism>
    <name type="scientific">Gorilla gorilla gorilla</name>
    <name type="common">Western lowland gorilla</name>
    <dbReference type="NCBI Taxonomy" id="9595"/>
    <lineage>
        <taxon>Eukaryota</taxon>
        <taxon>Metazoa</taxon>
        <taxon>Chordata</taxon>
        <taxon>Craniata</taxon>
        <taxon>Vertebrata</taxon>
        <taxon>Euteleostomi</taxon>
        <taxon>Mammalia</taxon>
        <taxon>Eutheria</taxon>
        <taxon>Euarchontoglires</taxon>
        <taxon>Primates</taxon>
        <taxon>Haplorrhini</taxon>
        <taxon>Catarrhini</taxon>
        <taxon>Hominidae</taxon>
        <taxon>Gorilla</taxon>
    </lineage>
</organism>
<reference key="1">
    <citation type="journal article" date="1994" name="Biochem. Genet.">
        <title>Molecular genetics of chimpanzee Rh-related genes: their relationship with the R-C-E-F blood group system, the chimpanzee counterpart of the human rhesus system.</title>
        <authorList>
            <person name="Salvignol I."/>
            <person name="Blancher A."/>
            <person name="Calvas P."/>
            <person name="Clayton J."/>
            <person name="Socha W.W."/>
            <person name="Colin Y."/>
            <person name="Ruffie J."/>
        </authorList>
    </citation>
    <scope>NUCLEOTIDE SEQUENCE [MRNA]</scope>
    <source>
        <tissue>Bone marrow</tissue>
    </source>
</reference>
<name>RHLD_GORGO</name>
<keyword id="KW-0472">Membrane</keyword>
<keyword id="KW-1185">Reference proteome</keyword>
<keyword id="KW-0812">Transmembrane</keyword>
<keyword id="KW-1133">Transmembrane helix</keyword>
<sequence length="417" mass="44969">MSSKYPRSVRCCLPLCALTLEAALTLLFYFFTHYDASLEDQKGLVASYQVGQDLTVMAAIGFGFLTSSFRGHSWSSVAFNLFMLALGVQWAILLDGFLSQFPPGKVVITLFSIRLATMSALSVLISAGAVLGYVNLVQLVVMVLVEVTALGTMRMVISNIFNTDYHMNMMHIYVFAACFGLSVAWCLPKPLAKGTEDKDQTATIPSLSAMLGALFLWMFWPSFNSALLRSPIERKNAVFNTYYAVAVSVVTAISVSSLAHPQGKINMTYMHNAVLAGGVAVATSCHLIPSPWLAMVLGLVAGLISIGGAKCLPGCCNRVLGIHDSSVMHYNFSLLGLLGEIIYIVLLVLDTVGAGNGMVGFQVLVSIGELSLAIVIALTSGLLTGLLLNLKIWKAPHAAKYFDDQVFWKFPHLAVGF</sequence>
<comment type="function">
    <text>May be part of an oligomeric complex which is likely to have a transport or channel function in the erythrocyte membrane.</text>
</comment>
<comment type="subcellular location">
    <subcellularLocation>
        <location>Membrane</location>
        <topology>Multi-pass membrane protein</topology>
    </subcellularLocation>
</comment>
<comment type="similarity">
    <text evidence="2">Belongs to the ammonium transporter (TC 2.A.49) family. Rh subfamily.</text>
</comment>
<accession>Q28427</accession>
<evidence type="ECO:0000255" key="1"/>
<evidence type="ECO:0000305" key="2"/>
<protein>
    <recommendedName>
        <fullName>RH-like protein ID</fullName>
    </recommendedName>
    <alternativeName>
        <fullName>Rhesus-like protein ID</fullName>
    </alternativeName>
</protein>
<dbReference type="EMBL" id="L37053">
    <property type="protein sequence ID" value="AAA65627.1"/>
    <property type="molecule type" value="mRNA"/>
</dbReference>
<dbReference type="PIR" id="I37076">
    <property type="entry name" value="I37076"/>
</dbReference>
<dbReference type="RefSeq" id="NP_001266526.1">
    <property type="nucleotide sequence ID" value="NM_001279597.1"/>
</dbReference>
<dbReference type="SMR" id="Q28427"/>
<dbReference type="FunCoup" id="Q28427">
    <property type="interactions" value="17"/>
</dbReference>
<dbReference type="STRING" id="9593.ENSGGOP00000017849"/>
<dbReference type="GeneID" id="101141062"/>
<dbReference type="CTD" id="6007"/>
<dbReference type="eggNOG" id="KOG3796">
    <property type="taxonomic scope" value="Eukaryota"/>
</dbReference>
<dbReference type="InParanoid" id="Q28427"/>
<dbReference type="Proteomes" id="UP000001519">
    <property type="component" value="Unplaced"/>
</dbReference>
<dbReference type="GO" id="GO:0005886">
    <property type="term" value="C:plasma membrane"/>
    <property type="evidence" value="ECO:0000318"/>
    <property type="project" value="GO_Central"/>
</dbReference>
<dbReference type="GO" id="GO:0008519">
    <property type="term" value="F:ammonium channel activity"/>
    <property type="evidence" value="ECO:0000318"/>
    <property type="project" value="GO_Central"/>
</dbReference>
<dbReference type="GO" id="GO:0097272">
    <property type="term" value="P:ammonium homeostasis"/>
    <property type="evidence" value="ECO:0000318"/>
    <property type="project" value="GO_Central"/>
</dbReference>
<dbReference type="GO" id="GO:0072488">
    <property type="term" value="P:ammonium transmembrane transport"/>
    <property type="evidence" value="ECO:0000318"/>
    <property type="project" value="GO_Central"/>
</dbReference>
<dbReference type="FunFam" id="1.10.3430.10:FF:000009">
    <property type="entry name" value="Blood group Rh(D) polypeptide"/>
    <property type="match status" value="1"/>
</dbReference>
<dbReference type="Gene3D" id="1.10.3430.10">
    <property type="entry name" value="Ammonium transporter AmtB like domains"/>
    <property type="match status" value="1"/>
</dbReference>
<dbReference type="InterPro" id="IPR029020">
    <property type="entry name" value="Ammonium/urea_transptr"/>
</dbReference>
<dbReference type="InterPro" id="IPR024041">
    <property type="entry name" value="NH4_transpt_AmtB-like_dom"/>
</dbReference>
<dbReference type="InterPro" id="IPR002229">
    <property type="entry name" value="RhesusRHD"/>
</dbReference>
<dbReference type="PANTHER" id="PTHR11730">
    <property type="entry name" value="AMMONIUM TRANSPORTER"/>
    <property type="match status" value="1"/>
</dbReference>
<dbReference type="PANTHER" id="PTHR11730:SF43">
    <property type="entry name" value="BLOOD GROUP RH(CE) POLYPEPTIDE-RELATED"/>
    <property type="match status" value="1"/>
</dbReference>
<dbReference type="Pfam" id="PF00909">
    <property type="entry name" value="Ammonium_transp"/>
    <property type="match status" value="1"/>
</dbReference>
<dbReference type="PRINTS" id="PR00342">
    <property type="entry name" value="RHESUSRHD"/>
</dbReference>
<dbReference type="SUPFAM" id="SSF111352">
    <property type="entry name" value="Ammonium transporter"/>
    <property type="match status" value="1"/>
</dbReference>